<feature type="chain" id="PRO_0000087117" description="RecBCD enzyme subunit RecC">
    <location>
        <begin position="1"/>
        <end position="1070"/>
    </location>
</feature>
<keyword id="KW-0067">ATP-binding</keyword>
<keyword id="KW-0227">DNA damage</keyword>
<keyword id="KW-0234">DNA repair</keyword>
<keyword id="KW-0238">DNA-binding</keyword>
<keyword id="KW-0269">Exonuclease</keyword>
<keyword id="KW-0347">Helicase</keyword>
<keyword id="KW-0378">Hydrolase</keyword>
<keyword id="KW-0540">Nuclease</keyword>
<keyword id="KW-0547">Nucleotide-binding</keyword>
<keyword id="KW-1185">Reference proteome</keyword>
<name>RECC_BUCAI</name>
<sequence length="1070" mass="128579">MFTIYKSNSLNTLLLKAYHIIEEKPFSNIFEKEIFIYDNKVLFQYLNIFIAEKKGISANFKFYHPNDFIWKLFKIILSKKELKNIFTHSMIIWEIIKILDNKKFFENCSKKKDMIKKFKFSFLMASIFKKYILYRPEWINQWEIEKNISIFDKNEQWQIKLWMEIIHNTKKINQSSDHFANLFYNIQKIIKEKKIKKKYLPKRFFIISSFSMNPSYIKIFQNISIYTDIYFLYITPFKKNIFNFIQDNKIFTDIKIEKKNILNDSLITLWGQYEEIYYFYILKSKKNKVINCFKKNKNKSLLSQIKNNFFNDSEFTRKKRFLEISDHSISINICFNKKNEIEVLYEKLLIFLNENSSIKPGDIVVTSFSLDTYISSINLIFQSIDNKKTIPFFIAKKSSKTTEIMLWSFKKILNLSNSRFENEEILELLDVPEIAEKFNFSEEEIKILYHWIEETNIRWGINEKHKNYLLFPKNKQNTWFYGIEKLLLSYAMNDTEKIWNGVLSCSFINGSRSELIGKLISFIKILEKWQKKLSKLQYLTYWRSLYSDLVSDFFQNNTKIEKSIQIIQKKWIEIIDDSLSSNYLKKISINILKKIFFYKYYDNNHEIFLPGVVNFCYPDSVCYIPFKVICMIGTDHTSIPKTNYLDNFNLLKKYPLIGDINLYQKYSYLFVQSLSCAEKYFYISYIGYSVKDESKVHPSILVDQLLNYITLNFCFIGDQNLSYKENSKKITKYLCKKHKKQFFYETKNIESFIQDDIKNDFKHTEKNISHKNLLKKNTDNEINLKDLINFWKHPIRYFYNSHLKIKIRQKKQKINTTETFLVNPLNSFKIKNKLLDYIIHNKNITKLYQHYLLSGKLPYHFFGEIFWIKNIKEMKLIANKVMQYRIEKEEKKINLNIEKYQIYGVLSEIQSTGLLRWKTSSIRYSDRIALWLEHLIYSILGGCGKSKIIGYKSQIWSFSSLNSHRAHSYLLEYIKGYIKGMKEPLFLTKSGASWLDQVYDERNNCIKNDYYTKIKAYKKLLYTWKGDNYTEGEQEDYYLKKTITISNKKNIKKICESAEKWLIPILKNKG</sequence>
<gene>
    <name evidence="1" type="primary">recC</name>
    <name type="ordered locus">BU453</name>
</gene>
<reference key="1">
    <citation type="journal article" date="2000" name="Nature">
        <title>Genome sequence of the endocellular bacterial symbiont of aphids Buchnera sp. APS.</title>
        <authorList>
            <person name="Shigenobu S."/>
            <person name="Watanabe H."/>
            <person name="Hattori M."/>
            <person name="Sakaki Y."/>
            <person name="Ishikawa H."/>
        </authorList>
    </citation>
    <scope>NUCLEOTIDE SEQUENCE [LARGE SCALE GENOMIC DNA]</scope>
    <source>
        <strain>APS</strain>
    </source>
</reference>
<organism>
    <name type="scientific">Buchnera aphidicola subsp. Acyrthosiphon pisum (strain APS)</name>
    <name type="common">Acyrthosiphon pisum symbiotic bacterium</name>
    <dbReference type="NCBI Taxonomy" id="107806"/>
    <lineage>
        <taxon>Bacteria</taxon>
        <taxon>Pseudomonadati</taxon>
        <taxon>Pseudomonadota</taxon>
        <taxon>Gammaproteobacteria</taxon>
        <taxon>Enterobacterales</taxon>
        <taxon>Erwiniaceae</taxon>
        <taxon>Buchnera</taxon>
    </lineage>
</organism>
<protein>
    <recommendedName>
        <fullName evidence="1">RecBCD enzyme subunit RecC</fullName>
    </recommendedName>
    <alternativeName>
        <fullName evidence="1">Exonuclease V subunit RecC</fullName>
        <shortName evidence="1">ExoV subunit RecC</shortName>
    </alternativeName>
    <alternativeName>
        <fullName evidence="1">Helicase/nuclease RecBCD subunit RecC</fullName>
    </alternativeName>
</protein>
<proteinExistence type="inferred from homology"/>
<comment type="function">
    <text evidence="1">A helicase/nuclease that prepares dsDNA breaks (DSB) for recombinational DNA repair. Binds to DSBs and unwinds DNA via a highly rapid and processive ATP-dependent bidirectional helicase activity. Unwinds dsDNA until it encounters a Chi (crossover hotspot instigator) sequence from the 3' direction. Cuts ssDNA a few nucleotides 3' to the Chi site. The properties and activities of the enzyme are changed at Chi. The Chi-altered holoenzyme produces a long 3'-ssDNA overhang and facilitates RecA-binding to the ssDNA for homologous DNA recombination and repair. Holoenzyme degrades any linearized DNA that is unable to undergo homologous recombination. In the holoenzyme this subunit recognizes the wild-type Chi sequence, and when added to isolated RecB increases its ATP-dependent helicase processivity.</text>
</comment>
<comment type="subunit">
    <text evidence="1">Heterotrimer of RecB, RecC and RecD. All subunits contribute to DNA-binding.</text>
</comment>
<comment type="miscellaneous">
    <text evidence="1">In the RecBCD complex, RecB has a slow 3'-5' helicase, an exonuclease activity and loads RecA onto ssDNA, RecD has a fast 5'-3' helicase activity, while RecC stimulates the ATPase and processivity of the RecB helicase and contributes to recognition of the Chi site.</text>
</comment>
<comment type="similarity">
    <text evidence="1">Belongs to the RecC family.</text>
</comment>
<evidence type="ECO:0000255" key="1">
    <source>
        <dbReference type="HAMAP-Rule" id="MF_01486"/>
    </source>
</evidence>
<accession>P57528</accession>
<dbReference type="EMBL" id="BA000003">
    <property type="protein sequence ID" value="BAB13151.1"/>
    <property type="molecule type" value="Genomic_DNA"/>
</dbReference>
<dbReference type="RefSeq" id="NP_240265.1">
    <property type="nucleotide sequence ID" value="NC_002528.1"/>
</dbReference>
<dbReference type="RefSeq" id="WP_010896125.1">
    <property type="nucleotide sequence ID" value="NC_002528.1"/>
</dbReference>
<dbReference type="SMR" id="P57528"/>
<dbReference type="STRING" id="563178.BUAP5A_446"/>
<dbReference type="EnsemblBacteria" id="BAB13151">
    <property type="protein sequence ID" value="BAB13151"/>
    <property type="gene ID" value="BAB13151"/>
</dbReference>
<dbReference type="KEGG" id="buc:BU453"/>
<dbReference type="PATRIC" id="fig|107806.10.peg.463"/>
<dbReference type="eggNOG" id="COG1330">
    <property type="taxonomic scope" value="Bacteria"/>
</dbReference>
<dbReference type="HOGENOM" id="CLU_007513_0_0_6"/>
<dbReference type="Proteomes" id="UP000001806">
    <property type="component" value="Chromosome"/>
</dbReference>
<dbReference type="GO" id="GO:0009338">
    <property type="term" value="C:exodeoxyribonuclease V complex"/>
    <property type="evidence" value="ECO:0007669"/>
    <property type="project" value="InterPro"/>
</dbReference>
<dbReference type="GO" id="GO:0005524">
    <property type="term" value="F:ATP binding"/>
    <property type="evidence" value="ECO:0007669"/>
    <property type="project" value="UniProtKB-UniRule"/>
</dbReference>
<dbReference type="GO" id="GO:0003677">
    <property type="term" value="F:DNA binding"/>
    <property type="evidence" value="ECO:0007669"/>
    <property type="project" value="UniProtKB-UniRule"/>
</dbReference>
<dbReference type="GO" id="GO:0003678">
    <property type="term" value="F:DNA helicase activity"/>
    <property type="evidence" value="ECO:0007669"/>
    <property type="project" value="UniProtKB-UniRule"/>
</dbReference>
<dbReference type="GO" id="GO:0008854">
    <property type="term" value="F:exodeoxyribonuclease V activity"/>
    <property type="evidence" value="ECO:0007669"/>
    <property type="project" value="UniProtKB-EC"/>
</dbReference>
<dbReference type="GO" id="GO:0000724">
    <property type="term" value="P:double-strand break repair via homologous recombination"/>
    <property type="evidence" value="ECO:0007669"/>
    <property type="project" value="UniProtKB-UniRule"/>
</dbReference>
<dbReference type="CDD" id="cd22353">
    <property type="entry name" value="RecC_C-like"/>
    <property type="match status" value="1"/>
</dbReference>
<dbReference type="Gene3D" id="1.10.10.160">
    <property type="match status" value="1"/>
</dbReference>
<dbReference type="Gene3D" id="1.10.10.990">
    <property type="match status" value="1"/>
</dbReference>
<dbReference type="Gene3D" id="3.40.50.10930">
    <property type="match status" value="1"/>
</dbReference>
<dbReference type="Gene3D" id="3.40.50.300">
    <property type="entry name" value="P-loop containing nucleotide triphosphate hydrolases"/>
    <property type="match status" value="1"/>
</dbReference>
<dbReference type="Gene3D" id="1.10.486.10">
    <property type="entry name" value="PCRA, domain 4"/>
    <property type="match status" value="1"/>
</dbReference>
<dbReference type="HAMAP" id="MF_01486">
    <property type="entry name" value="RecC"/>
    <property type="match status" value="1"/>
</dbReference>
<dbReference type="InterPro" id="IPR013986">
    <property type="entry name" value="DExx_box_DNA_helicase_dom_sf"/>
</dbReference>
<dbReference type="InterPro" id="IPR027417">
    <property type="entry name" value="P-loop_NTPase"/>
</dbReference>
<dbReference type="InterPro" id="IPR006697">
    <property type="entry name" value="RecC"/>
</dbReference>
<dbReference type="InterPro" id="IPR041500">
    <property type="entry name" value="RecC_C"/>
</dbReference>
<dbReference type="InterPro" id="IPR011335">
    <property type="entry name" value="Restrct_endonuc-II-like"/>
</dbReference>
<dbReference type="NCBIfam" id="TIGR01450">
    <property type="entry name" value="recC"/>
    <property type="match status" value="1"/>
</dbReference>
<dbReference type="PANTHER" id="PTHR30591">
    <property type="entry name" value="RECBCD ENZYME SUBUNIT RECC"/>
    <property type="match status" value="1"/>
</dbReference>
<dbReference type="PANTHER" id="PTHR30591:SF1">
    <property type="entry name" value="RECBCD ENZYME SUBUNIT RECC"/>
    <property type="match status" value="1"/>
</dbReference>
<dbReference type="Pfam" id="PF04257">
    <property type="entry name" value="Exonuc_V_gamma"/>
    <property type="match status" value="1"/>
</dbReference>
<dbReference type="Pfam" id="PF17946">
    <property type="entry name" value="RecC_C"/>
    <property type="match status" value="1"/>
</dbReference>
<dbReference type="PIRSF" id="PIRSF000980">
    <property type="entry name" value="RecC"/>
    <property type="match status" value="1"/>
</dbReference>
<dbReference type="SUPFAM" id="SSF52540">
    <property type="entry name" value="P-loop containing nucleoside triphosphate hydrolases"/>
    <property type="match status" value="2"/>
</dbReference>
<dbReference type="SUPFAM" id="SSF52980">
    <property type="entry name" value="Restriction endonuclease-like"/>
    <property type="match status" value="1"/>
</dbReference>